<sequence length="225" mass="23837">MNTSLTNAARLFTAGLRALLVLTVVTGIVYPLVVTGVAQGLFPGKANGSEIKADGKVVGSSLIGQSYNLPLKEGRETPEPDLRWFQGRPANGLGTNTVNTRYELILSGATNRSADDPELLQWVQDAKAAVVRDNSVPGHPVRPEDVPADAVTSSGSGLDPDISPRYADLQVHRVAAKNGLPAERVQELVDEHTTPRTLGFIGEPRVNVLELNIALVELVAPGAGH</sequence>
<feature type="chain" id="PRO_0000197019" description="Potassium-transporting ATPase KdpC subunit">
    <location>
        <begin position="1"/>
        <end position="225"/>
    </location>
</feature>
<feature type="transmembrane region" description="Helical" evidence="1">
    <location>
        <begin position="18"/>
        <end position="38"/>
    </location>
</feature>
<feature type="region of interest" description="Disordered" evidence="2">
    <location>
        <begin position="134"/>
        <end position="161"/>
    </location>
</feature>
<name>KDPC_STRCO</name>
<accession>Q9X8Z8</accession>
<reference key="1">
    <citation type="journal article" date="2002" name="Nature">
        <title>Complete genome sequence of the model actinomycete Streptomyces coelicolor A3(2).</title>
        <authorList>
            <person name="Bentley S.D."/>
            <person name="Chater K.F."/>
            <person name="Cerdeno-Tarraga A.-M."/>
            <person name="Challis G.L."/>
            <person name="Thomson N.R."/>
            <person name="James K.D."/>
            <person name="Harris D.E."/>
            <person name="Quail M.A."/>
            <person name="Kieser H."/>
            <person name="Harper D."/>
            <person name="Bateman A."/>
            <person name="Brown S."/>
            <person name="Chandra G."/>
            <person name="Chen C.W."/>
            <person name="Collins M."/>
            <person name="Cronin A."/>
            <person name="Fraser A."/>
            <person name="Goble A."/>
            <person name="Hidalgo J."/>
            <person name="Hornsby T."/>
            <person name="Howarth S."/>
            <person name="Huang C.-H."/>
            <person name="Kieser T."/>
            <person name="Larke L."/>
            <person name="Murphy L.D."/>
            <person name="Oliver K."/>
            <person name="O'Neil S."/>
            <person name="Rabbinowitsch E."/>
            <person name="Rajandream M.A."/>
            <person name="Rutherford K.M."/>
            <person name="Rutter S."/>
            <person name="Seeger K."/>
            <person name="Saunders D."/>
            <person name="Sharp S."/>
            <person name="Squares R."/>
            <person name="Squares S."/>
            <person name="Taylor K."/>
            <person name="Warren T."/>
            <person name="Wietzorrek A."/>
            <person name="Woodward J.R."/>
            <person name="Barrell B.G."/>
            <person name="Parkhill J."/>
            <person name="Hopwood D.A."/>
        </authorList>
    </citation>
    <scope>NUCLEOTIDE SEQUENCE [LARGE SCALE GENOMIC DNA]</scope>
    <source>
        <strain>ATCC BAA-471 / A3(2) / M145</strain>
    </source>
</reference>
<evidence type="ECO:0000255" key="1">
    <source>
        <dbReference type="HAMAP-Rule" id="MF_00276"/>
    </source>
</evidence>
<evidence type="ECO:0000256" key="2">
    <source>
        <dbReference type="SAM" id="MobiDB-lite"/>
    </source>
</evidence>
<organism>
    <name type="scientific">Streptomyces coelicolor (strain ATCC BAA-471 / A3(2) / M145)</name>
    <dbReference type="NCBI Taxonomy" id="100226"/>
    <lineage>
        <taxon>Bacteria</taxon>
        <taxon>Bacillati</taxon>
        <taxon>Actinomycetota</taxon>
        <taxon>Actinomycetes</taxon>
        <taxon>Kitasatosporales</taxon>
        <taxon>Streptomycetaceae</taxon>
        <taxon>Streptomyces</taxon>
        <taxon>Streptomyces albidoflavus group</taxon>
    </lineage>
</organism>
<dbReference type="EMBL" id="AL939117">
    <property type="protein sequence ID" value="CAB44419.1"/>
    <property type="molecule type" value="Genomic_DNA"/>
</dbReference>
<dbReference type="PIR" id="T36651">
    <property type="entry name" value="T36651"/>
</dbReference>
<dbReference type="RefSeq" id="NP_627908.1">
    <property type="nucleotide sequence ID" value="NC_003888.3"/>
</dbReference>
<dbReference type="RefSeq" id="WP_011029186.1">
    <property type="nucleotide sequence ID" value="NZ_VNID01000003.1"/>
</dbReference>
<dbReference type="SMR" id="Q9X8Z8"/>
<dbReference type="FunCoup" id="Q9X8Z8">
    <property type="interactions" value="59"/>
</dbReference>
<dbReference type="STRING" id="100226.gene:17761340"/>
<dbReference type="PaxDb" id="100226-SCO3716"/>
<dbReference type="KEGG" id="sco:SCO3716"/>
<dbReference type="PATRIC" id="fig|100226.15.peg.3777"/>
<dbReference type="eggNOG" id="COG2156">
    <property type="taxonomic scope" value="Bacteria"/>
</dbReference>
<dbReference type="HOGENOM" id="CLU_077094_2_0_11"/>
<dbReference type="InParanoid" id="Q9X8Z8"/>
<dbReference type="OrthoDB" id="9788285at2"/>
<dbReference type="PhylomeDB" id="Q9X8Z8"/>
<dbReference type="Proteomes" id="UP000001973">
    <property type="component" value="Chromosome"/>
</dbReference>
<dbReference type="GO" id="GO:0005886">
    <property type="term" value="C:plasma membrane"/>
    <property type="evidence" value="ECO:0007669"/>
    <property type="project" value="UniProtKB-SubCell"/>
</dbReference>
<dbReference type="GO" id="GO:0005524">
    <property type="term" value="F:ATP binding"/>
    <property type="evidence" value="ECO:0007669"/>
    <property type="project" value="UniProtKB-UniRule"/>
</dbReference>
<dbReference type="GO" id="GO:0008556">
    <property type="term" value="F:P-type potassium transmembrane transporter activity"/>
    <property type="evidence" value="ECO:0000318"/>
    <property type="project" value="GO_Central"/>
</dbReference>
<dbReference type="GO" id="GO:0071805">
    <property type="term" value="P:potassium ion transmembrane transport"/>
    <property type="evidence" value="ECO:0000318"/>
    <property type="project" value="GO_Central"/>
</dbReference>
<dbReference type="HAMAP" id="MF_00276">
    <property type="entry name" value="KdpC"/>
    <property type="match status" value="1"/>
</dbReference>
<dbReference type="InterPro" id="IPR003820">
    <property type="entry name" value="KdpC"/>
</dbReference>
<dbReference type="NCBIfam" id="TIGR00681">
    <property type="entry name" value="kdpC"/>
    <property type="match status" value="1"/>
</dbReference>
<dbReference type="NCBIfam" id="NF010599">
    <property type="entry name" value="PRK13994.1"/>
    <property type="match status" value="1"/>
</dbReference>
<dbReference type="PANTHER" id="PTHR30042">
    <property type="entry name" value="POTASSIUM-TRANSPORTING ATPASE C CHAIN"/>
    <property type="match status" value="1"/>
</dbReference>
<dbReference type="PANTHER" id="PTHR30042:SF2">
    <property type="entry name" value="POTASSIUM-TRANSPORTING ATPASE KDPC SUBUNIT"/>
    <property type="match status" value="1"/>
</dbReference>
<dbReference type="Pfam" id="PF02669">
    <property type="entry name" value="KdpC"/>
    <property type="match status" value="1"/>
</dbReference>
<dbReference type="PIRSF" id="PIRSF001296">
    <property type="entry name" value="K_ATPase_KdpC"/>
    <property type="match status" value="1"/>
</dbReference>
<comment type="function">
    <text evidence="1">Part of the high-affinity ATP-driven potassium transport (or Kdp) system, which catalyzes the hydrolysis of ATP coupled with the electrogenic transport of potassium into the cytoplasm. This subunit acts as a catalytic chaperone that increases the ATP-binding affinity of the ATP-hydrolyzing subunit KdpB by the formation of a transient KdpB/KdpC/ATP ternary complex.</text>
</comment>
<comment type="subunit">
    <text evidence="1">The system is composed of three essential subunits: KdpA, KdpB and KdpC.</text>
</comment>
<comment type="subcellular location">
    <subcellularLocation>
        <location evidence="1">Cell membrane</location>
        <topology evidence="1">Single-pass membrane protein</topology>
    </subcellularLocation>
</comment>
<comment type="similarity">
    <text evidence="1">Belongs to the KdpC family.</text>
</comment>
<keyword id="KW-0067">ATP-binding</keyword>
<keyword id="KW-1003">Cell membrane</keyword>
<keyword id="KW-0406">Ion transport</keyword>
<keyword id="KW-0472">Membrane</keyword>
<keyword id="KW-0547">Nucleotide-binding</keyword>
<keyword id="KW-0630">Potassium</keyword>
<keyword id="KW-0633">Potassium transport</keyword>
<keyword id="KW-1185">Reference proteome</keyword>
<keyword id="KW-0812">Transmembrane</keyword>
<keyword id="KW-1133">Transmembrane helix</keyword>
<keyword id="KW-0813">Transport</keyword>
<gene>
    <name evidence="1" type="primary">kdpC</name>
    <name type="ordered locus">SCO3716</name>
    <name type="ORF">SCH35.08</name>
</gene>
<protein>
    <recommendedName>
        <fullName evidence="1">Potassium-transporting ATPase KdpC subunit</fullName>
    </recommendedName>
    <alternativeName>
        <fullName evidence="1">ATP phosphohydrolase [potassium-transporting] C chain</fullName>
    </alternativeName>
    <alternativeName>
        <fullName evidence="1">Potassium-binding and translocating subunit C</fullName>
    </alternativeName>
    <alternativeName>
        <fullName evidence="1">Potassium-translocating ATPase C chain</fullName>
    </alternativeName>
</protein>
<proteinExistence type="inferred from homology"/>